<comment type="function">
    <text evidence="7 8 9">Cell wall-anchored surface receptor that extracts heme from oxidized metHb to enable growth on hemoglobin as a sole iron source (PubMed:17041042). Rapidly extracts heme from hemoglobin and transfers it to IsdA or IsdC, which then relays it to the membrane transporter/IsdEF for internalization (PubMed:17041042, PubMed:19398548). Also promotes resistance to hydrogen peroxide and killing by neutrophils (PubMed:18097052).</text>
</comment>
<comment type="subunit">
    <text evidence="6 9">Interacts with host HBA; this interaction allows heme extraction as iron source (PubMed:12574635). Interacts with IsdA (PubMed:19398548).</text>
</comment>
<comment type="subcellular location">
    <subcellularLocation>
        <location evidence="9 11 12">Secreted</location>
        <location evidence="9 11 12">Cell wall</location>
        <topology evidence="9 11 12">Peptidoglycan-anchor</topology>
    </subcellularLocation>
    <text evidence="11">Anchored to the cell wall by sortase A.</text>
</comment>
<comment type="induction">
    <text>Repressed by fur in the presence of iron.</text>
</comment>
<comment type="similarity">
    <text evidence="10">Belongs to the IsdB family.</text>
</comment>
<protein>
    <recommendedName>
        <fullName>Iron-regulated surface determinant protein B</fullName>
    </recommendedName>
    <alternativeName>
        <fullName>Fur-regulated protein B</fullName>
    </alternativeName>
    <alternativeName>
        <fullName>Staphylococcal iron-regulated protein H</fullName>
    </alternativeName>
    <alternativeName>
        <fullName>Staphylococcus aureus surface protein J</fullName>
    </alternativeName>
</protein>
<proteinExistence type="evidence at protein level"/>
<evidence type="ECO:0000250" key="1">
    <source>
        <dbReference type="UniProtKB" id="Q7A656"/>
    </source>
</evidence>
<evidence type="ECO:0000255" key="2"/>
<evidence type="ECO:0000255" key="3">
    <source>
        <dbReference type="PROSITE-ProRule" id="PRU00337"/>
    </source>
</evidence>
<evidence type="ECO:0000255" key="4">
    <source>
        <dbReference type="PROSITE-ProRule" id="PRU00477"/>
    </source>
</evidence>
<evidence type="ECO:0000256" key="5">
    <source>
        <dbReference type="SAM" id="MobiDB-lite"/>
    </source>
</evidence>
<evidence type="ECO:0000269" key="6">
    <source>
    </source>
</evidence>
<evidence type="ECO:0000269" key="7">
    <source>
    </source>
</evidence>
<evidence type="ECO:0000269" key="8">
    <source>
    </source>
</evidence>
<evidence type="ECO:0000269" key="9">
    <source>
    </source>
</evidence>
<evidence type="ECO:0000305" key="10"/>
<evidence type="ECO:0000305" key="11">
    <source>
    </source>
</evidence>
<evidence type="ECO:0000305" key="12">
    <source>
    </source>
</evidence>
<keyword id="KW-0134">Cell wall</keyword>
<keyword id="KW-0349">Heme</keyword>
<keyword id="KW-0408">Iron</keyword>
<keyword id="KW-0479">Metal-binding</keyword>
<keyword id="KW-0572">Peptidoglycan-anchor</keyword>
<keyword id="KW-0677">Repeat</keyword>
<keyword id="KW-0964">Secreted</keyword>
<keyword id="KW-0732">Signal</keyword>
<keyword id="KW-0843">Virulence</keyword>
<sequence>MNKQQKEFKSFYSIRKSSLGVASVAISTLLLLMSNGEAQAAAEETGGTNTEAQPKTEAVASPTTTSEKAPETKPVANAVSVSNKEVEAPTSETKEAKEVKEVKAPKETKEVKPAAKATNNTYPILNQELREAIKNPAIKDKDHSAPNSRPIDFEMKKKDGTQQFYHYASSVKPARVIFTDSKPEIELGLQSGQFWRKFEVYEGDKKLPIKLVSYDTVKDYAYIRFSVSNGTKAVKIVSSTHFNNKEEKYDYTLMEFAQPIYNSADKFKTEEDYKAEKLLAPYKKAKTLERQVYELNKIQDKLPEKLKAEYKKKLEDTKKALDEQVKSAITEFQNVQPTNEKMTDLQDTKYVVYESVENNESMMDTFVKHPIKTGMLNGKKYMVMETTNDDYWKDFMVEGQRVRTISKDAKNNTRTIIFPYVEGKTLYDAIVKVHVKTIDYDGQYHVRIVDKEAFTKANTDKSNKKEQQDNSAKKEATPATPSKPTPSPVEKESQKQDSQKDDNKQLPSVEKENDASSESGKDKTPATKPTKGEVESSSTTPTKVVSTTQNVAKPTTASSKTTKDVVQTSAGSSEAKDSAPLQKANIKNTNDGHTQSQNNKNTQENKAKSLPQTGEESNKDMTLPLMALLALSSIVAFVLPRKRKN</sequence>
<name>ISDB_STAAE</name>
<organism>
    <name type="scientific">Staphylococcus aureus (strain Newman)</name>
    <dbReference type="NCBI Taxonomy" id="426430"/>
    <lineage>
        <taxon>Bacteria</taxon>
        <taxon>Bacillati</taxon>
        <taxon>Bacillota</taxon>
        <taxon>Bacilli</taxon>
        <taxon>Bacillales</taxon>
        <taxon>Staphylococcaceae</taxon>
        <taxon>Staphylococcus</taxon>
    </lineage>
</organism>
<reference key="1">
    <citation type="journal article" date="2008" name="J. Bacteriol.">
        <title>Genome sequence of Staphylococcus aureus strain Newman and comparative analysis of staphylococcal genomes: polymorphism and evolution of two major pathogenicity islands.</title>
        <authorList>
            <person name="Baba T."/>
            <person name="Bae T."/>
            <person name="Schneewind O."/>
            <person name="Takeuchi F."/>
            <person name="Hiramatsu K."/>
        </authorList>
    </citation>
    <scope>NUCLEOTIDE SEQUENCE [LARGE SCALE GENOMIC DNA]</scope>
    <source>
        <strain>Newman</strain>
    </source>
</reference>
<reference key="2">
    <citation type="journal article" date="2002" name="Proc. Natl. Acad. Sci. U.S.A.">
        <title>An iron-regulated sortase anchors a class of surface protein during Staphylococcus aureus pathogenesis.</title>
        <authorList>
            <person name="Mazmanian S.K."/>
            <person name="Ton-That H."/>
            <person name="Su K."/>
            <person name="Schneewind O."/>
        </authorList>
    </citation>
    <scope>SUBCELLULAR LOCATION</scope>
    <scope>PROCESSING BY SORTASE A</scope>
    <source>
        <strain>Newman</strain>
    </source>
</reference>
<reference key="3">
    <citation type="journal article" date="2003" name="Science">
        <title>Passage of heme-iron across the envelope of Staphylococcus aureus.</title>
        <authorList>
            <person name="Mazmanian S.K."/>
            <person name="Skaar E.P."/>
            <person name="Gaspar A.H."/>
            <person name="Humayun M."/>
            <person name="Gornicki P."/>
            <person name="Jelenska J."/>
            <person name="Joachmiak A."/>
            <person name="Missiakas D.M."/>
            <person name="Schneewind O."/>
        </authorList>
    </citation>
    <scope>BINDING TO HEMOGLOBIN</scope>
    <scope>IRON-REGULATED EXPRESSION</scope>
    <scope>SUBCELLULAR LOCATION</scope>
</reference>
<reference key="4">
    <citation type="journal article" date="2006" name="J. Bacteriol.">
        <title>Staphylococcus aureus IsdB is a hemoglobin receptor required for heme iron utilization.</title>
        <authorList>
            <person name="Torres V.J."/>
            <person name="Pishchany G."/>
            <person name="Humayun M."/>
            <person name="Schneewind O."/>
            <person name="Skaar E.P."/>
        </authorList>
    </citation>
    <scope>FUNCTION</scope>
    <scope>IRON-REGULATED EXPRESSION</scope>
</reference>
<reference key="5">
    <citation type="journal article" date="2008" name="J. Immunol.">
        <title>Neutrophil microbicides induce a pathogen survival response in community-associated methicillin-resistant Staphylococcus aureus.</title>
        <authorList>
            <person name="Palazzolo-Ballance A.M."/>
            <person name="Reniere M.L."/>
            <person name="Braughton K.R."/>
            <person name="Sturdevant D.E."/>
            <person name="Otto M."/>
            <person name="Kreiswirth B.N."/>
            <person name="Skaar E.P."/>
            <person name="DeLeo F.R."/>
        </authorList>
    </citation>
    <scope>FUNCTION IN RESISTANCE TO INNATE HOST DEFENSE</scope>
</reference>
<reference key="6">
    <citation type="journal article" date="2009" name="Infect. Immun.">
        <title>Subcellular localization of the Staphylococcus aureus heme iron transport components IsdA and IsdB.</title>
        <authorList>
            <person name="Pishchany G."/>
            <person name="Dickey S.E."/>
            <person name="Skaar E.P."/>
        </authorList>
    </citation>
    <scope>FUNCTION</scope>
    <scope>SUBCELLULAR LOCATION</scope>
    <scope>INTERACTION WITH ISDA</scope>
</reference>
<feature type="signal peptide" evidence="2">
    <location>
        <begin position="1"/>
        <end position="40"/>
    </location>
</feature>
<feature type="chain" id="PRO_0000317041" description="Iron-regulated surface determinant protein B">
    <location>
        <begin position="41"/>
        <end position="613"/>
    </location>
</feature>
<feature type="propeptide" id="PRO_0000317042" description="Removed by sortase" evidence="4 11">
    <location>
        <begin position="614"/>
        <end position="645"/>
    </location>
</feature>
<feature type="domain" description="NEAT 1" evidence="3">
    <location>
        <begin position="144"/>
        <end position="269"/>
    </location>
</feature>
<feature type="domain" description="NEAT 2" evidence="3">
    <location>
        <begin position="341"/>
        <end position="458"/>
    </location>
</feature>
<feature type="region of interest" description="Disordered" evidence="5">
    <location>
        <begin position="38"/>
        <end position="113"/>
    </location>
</feature>
<feature type="region of interest" description="Disordered" evidence="5">
    <location>
        <begin position="458"/>
        <end position="619"/>
    </location>
</feature>
<feature type="short sequence motif" description="YSIRK-G/S signaling motif" evidence="10">
    <location>
        <begin position="12"/>
        <end position="23"/>
    </location>
</feature>
<feature type="short sequence motif" description="LPXTG sorting signal" evidence="4">
    <location>
        <begin position="610"/>
        <end position="614"/>
    </location>
</feature>
<feature type="compositionally biased region" description="Low complexity" evidence="5">
    <location>
        <begin position="38"/>
        <end position="53"/>
    </location>
</feature>
<feature type="compositionally biased region" description="Basic and acidic residues" evidence="5">
    <location>
        <begin position="84"/>
        <end position="113"/>
    </location>
</feature>
<feature type="compositionally biased region" description="Basic and acidic residues" evidence="5">
    <location>
        <begin position="458"/>
        <end position="476"/>
    </location>
</feature>
<feature type="compositionally biased region" description="Basic and acidic residues" evidence="5">
    <location>
        <begin position="489"/>
        <end position="534"/>
    </location>
</feature>
<feature type="compositionally biased region" description="Low complexity" evidence="5">
    <location>
        <begin position="535"/>
        <end position="560"/>
    </location>
</feature>
<feature type="compositionally biased region" description="Polar residues" evidence="5">
    <location>
        <begin position="585"/>
        <end position="615"/>
    </location>
</feature>
<feature type="binding site" description="axial binding residue" evidence="1">
    <location>
        <position position="362"/>
    </location>
    <ligand>
        <name>heme</name>
        <dbReference type="ChEBI" id="CHEBI:30413"/>
    </ligand>
    <ligandPart>
        <name>Fe</name>
        <dbReference type="ChEBI" id="CHEBI:18248"/>
    </ligandPart>
</feature>
<feature type="binding site" description="axial binding residue" evidence="1">
    <location>
        <position position="440"/>
    </location>
    <ligand>
        <name>heme</name>
        <dbReference type="ChEBI" id="CHEBI:30413"/>
    </ligand>
    <ligandPart>
        <name>Fe</name>
        <dbReference type="ChEBI" id="CHEBI:18248"/>
    </ligandPart>
</feature>
<feature type="modified residue" description="Pentaglycyl murein peptidoglycan amidated threonine" evidence="4">
    <location>
        <position position="613"/>
    </location>
</feature>
<gene>
    <name type="primary">isdB</name>
    <name type="synonym">frpB</name>
    <name type="synonym">sasJ</name>
    <name type="synonym">sirH</name>
    <name type="ordered locus">NWMN_1040</name>
</gene>
<dbReference type="EMBL" id="AP009351">
    <property type="protein sequence ID" value="BAF67312.1"/>
    <property type="molecule type" value="Genomic_DNA"/>
</dbReference>
<dbReference type="RefSeq" id="WP_001041586.1">
    <property type="nucleotide sequence ID" value="NZ_JBBIAE010000001.1"/>
</dbReference>
<dbReference type="BMRB" id="A6QG30"/>
<dbReference type="SMR" id="A6QG30"/>
<dbReference type="KEGG" id="sae:NWMN_1040"/>
<dbReference type="HOGENOM" id="CLU_016167_0_0_9"/>
<dbReference type="PRO" id="PR:A6QG30"/>
<dbReference type="Proteomes" id="UP000006386">
    <property type="component" value="Chromosome"/>
</dbReference>
<dbReference type="GO" id="GO:0005576">
    <property type="term" value="C:extracellular region"/>
    <property type="evidence" value="ECO:0007669"/>
    <property type="project" value="UniProtKB-KW"/>
</dbReference>
<dbReference type="GO" id="GO:0015232">
    <property type="term" value="F:heme transmembrane transporter activity"/>
    <property type="evidence" value="ECO:0007669"/>
    <property type="project" value="InterPro"/>
</dbReference>
<dbReference type="GO" id="GO:0046872">
    <property type="term" value="F:metal ion binding"/>
    <property type="evidence" value="ECO:0007669"/>
    <property type="project" value="UniProtKB-KW"/>
</dbReference>
<dbReference type="CDD" id="cd06920">
    <property type="entry name" value="NEAT"/>
    <property type="match status" value="1"/>
</dbReference>
<dbReference type="Gene3D" id="1.20.58.1270">
    <property type="match status" value="1"/>
</dbReference>
<dbReference type="Gene3D" id="2.60.40.1850">
    <property type="match status" value="2"/>
</dbReference>
<dbReference type="InterPro" id="IPR019929">
    <property type="entry name" value="Iron-reg_IsdB"/>
</dbReference>
<dbReference type="InterPro" id="IPR048652">
    <property type="entry name" value="Isd_H_B_linker"/>
</dbReference>
<dbReference type="InterPro" id="IPR050436">
    <property type="entry name" value="IsdA"/>
</dbReference>
<dbReference type="InterPro" id="IPR019931">
    <property type="entry name" value="LPXTG_anchor"/>
</dbReference>
<dbReference type="InterPro" id="IPR006635">
    <property type="entry name" value="NEAT_dom"/>
</dbReference>
<dbReference type="InterPro" id="IPR037250">
    <property type="entry name" value="NEAT_dom_sf"/>
</dbReference>
<dbReference type="InterPro" id="IPR005877">
    <property type="entry name" value="YSIRK_signal_dom"/>
</dbReference>
<dbReference type="NCBIfam" id="TIGR03657">
    <property type="entry name" value="IsdB"/>
    <property type="match status" value="1"/>
</dbReference>
<dbReference type="NCBIfam" id="TIGR01167">
    <property type="entry name" value="LPXTG_anchor"/>
    <property type="match status" value="1"/>
</dbReference>
<dbReference type="NCBIfam" id="TIGR01168">
    <property type="entry name" value="YSIRK_signal"/>
    <property type="match status" value="1"/>
</dbReference>
<dbReference type="PANTHER" id="PTHR37824">
    <property type="entry name" value="IRON-REGULATED SURFACE DETERMINANT PROTEIN C"/>
    <property type="match status" value="1"/>
</dbReference>
<dbReference type="PANTHER" id="PTHR37824:SF1">
    <property type="entry name" value="IRON-REGULATED SURFACE DETERMINANT PROTEIN C"/>
    <property type="match status" value="1"/>
</dbReference>
<dbReference type="Pfam" id="PF00746">
    <property type="entry name" value="Gram_pos_anchor"/>
    <property type="match status" value="1"/>
</dbReference>
<dbReference type="Pfam" id="PF20861">
    <property type="entry name" value="Isd_H_B_linker"/>
    <property type="match status" value="1"/>
</dbReference>
<dbReference type="Pfam" id="PF05031">
    <property type="entry name" value="NEAT"/>
    <property type="match status" value="2"/>
</dbReference>
<dbReference type="Pfam" id="PF04650">
    <property type="entry name" value="YSIRK_signal"/>
    <property type="match status" value="1"/>
</dbReference>
<dbReference type="SMART" id="SM00725">
    <property type="entry name" value="NEAT"/>
    <property type="match status" value="2"/>
</dbReference>
<dbReference type="SUPFAM" id="SSF158911">
    <property type="entry name" value="NEAT domain-like"/>
    <property type="match status" value="2"/>
</dbReference>
<dbReference type="PROSITE" id="PS50847">
    <property type="entry name" value="GRAM_POS_ANCHORING"/>
    <property type="match status" value="1"/>
</dbReference>
<dbReference type="PROSITE" id="PS50978">
    <property type="entry name" value="NEAT"/>
    <property type="match status" value="2"/>
</dbReference>
<accession>A6QG30</accession>